<accession>Q3AH55</accession>
<dbReference type="EC" id="2.7.1.71" evidence="1"/>
<dbReference type="EMBL" id="CP000110">
    <property type="protein sequence ID" value="ABB36077.1"/>
    <property type="molecule type" value="Genomic_DNA"/>
</dbReference>
<dbReference type="SMR" id="Q3AH55"/>
<dbReference type="STRING" id="110662.Syncc9605_2345"/>
<dbReference type="KEGG" id="syd:Syncc9605_2345"/>
<dbReference type="eggNOG" id="COG0703">
    <property type="taxonomic scope" value="Bacteria"/>
</dbReference>
<dbReference type="HOGENOM" id="CLU_057607_2_3_3"/>
<dbReference type="UniPathway" id="UPA00053">
    <property type="reaction ID" value="UER00088"/>
</dbReference>
<dbReference type="GO" id="GO:0005829">
    <property type="term" value="C:cytosol"/>
    <property type="evidence" value="ECO:0007669"/>
    <property type="project" value="TreeGrafter"/>
</dbReference>
<dbReference type="GO" id="GO:0005524">
    <property type="term" value="F:ATP binding"/>
    <property type="evidence" value="ECO:0007669"/>
    <property type="project" value="UniProtKB-UniRule"/>
</dbReference>
<dbReference type="GO" id="GO:0000287">
    <property type="term" value="F:magnesium ion binding"/>
    <property type="evidence" value="ECO:0007669"/>
    <property type="project" value="UniProtKB-UniRule"/>
</dbReference>
<dbReference type="GO" id="GO:0004765">
    <property type="term" value="F:shikimate kinase activity"/>
    <property type="evidence" value="ECO:0007669"/>
    <property type="project" value="UniProtKB-UniRule"/>
</dbReference>
<dbReference type="GO" id="GO:0008652">
    <property type="term" value="P:amino acid biosynthetic process"/>
    <property type="evidence" value="ECO:0007669"/>
    <property type="project" value="UniProtKB-KW"/>
</dbReference>
<dbReference type="GO" id="GO:0009073">
    <property type="term" value="P:aromatic amino acid family biosynthetic process"/>
    <property type="evidence" value="ECO:0007669"/>
    <property type="project" value="UniProtKB-KW"/>
</dbReference>
<dbReference type="GO" id="GO:0009423">
    <property type="term" value="P:chorismate biosynthetic process"/>
    <property type="evidence" value="ECO:0007669"/>
    <property type="project" value="UniProtKB-UniRule"/>
</dbReference>
<dbReference type="CDD" id="cd00464">
    <property type="entry name" value="SK"/>
    <property type="match status" value="1"/>
</dbReference>
<dbReference type="Gene3D" id="3.40.50.300">
    <property type="entry name" value="P-loop containing nucleotide triphosphate hydrolases"/>
    <property type="match status" value="1"/>
</dbReference>
<dbReference type="HAMAP" id="MF_00109">
    <property type="entry name" value="Shikimate_kinase"/>
    <property type="match status" value="1"/>
</dbReference>
<dbReference type="InterPro" id="IPR027417">
    <property type="entry name" value="P-loop_NTPase"/>
</dbReference>
<dbReference type="InterPro" id="IPR031322">
    <property type="entry name" value="Shikimate/glucono_kinase"/>
</dbReference>
<dbReference type="InterPro" id="IPR000623">
    <property type="entry name" value="Shikimate_kinase/TSH1"/>
</dbReference>
<dbReference type="InterPro" id="IPR023000">
    <property type="entry name" value="Shikimate_kinase_CS"/>
</dbReference>
<dbReference type="PANTHER" id="PTHR21087">
    <property type="entry name" value="SHIKIMATE KINASE"/>
    <property type="match status" value="1"/>
</dbReference>
<dbReference type="PANTHER" id="PTHR21087:SF16">
    <property type="entry name" value="SHIKIMATE KINASE 1, CHLOROPLASTIC"/>
    <property type="match status" value="1"/>
</dbReference>
<dbReference type="Pfam" id="PF01202">
    <property type="entry name" value="SKI"/>
    <property type="match status" value="1"/>
</dbReference>
<dbReference type="PRINTS" id="PR01100">
    <property type="entry name" value="SHIKIMTKNASE"/>
</dbReference>
<dbReference type="SUPFAM" id="SSF52540">
    <property type="entry name" value="P-loop containing nucleoside triphosphate hydrolases"/>
    <property type="match status" value="1"/>
</dbReference>
<dbReference type="PROSITE" id="PS01128">
    <property type="entry name" value="SHIKIMATE_KINASE"/>
    <property type="match status" value="1"/>
</dbReference>
<reference key="1">
    <citation type="submission" date="2005-07" db="EMBL/GenBank/DDBJ databases">
        <title>Complete sequence of Synechococcus sp. CC9605.</title>
        <authorList>
            <consortium name="US DOE Joint Genome Institute"/>
            <person name="Copeland A."/>
            <person name="Lucas S."/>
            <person name="Lapidus A."/>
            <person name="Barry K."/>
            <person name="Detter J.C."/>
            <person name="Glavina T."/>
            <person name="Hammon N."/>
            <person name="Israni S."/>
            <person name="Pitluck S."/>
            <person name="Schmutz J."/>
            <person name="Martinez M."/>
            <person name="Larimer F."/>
            <person name="Land M."/>
            <person name="Kyrpides N."/>
            <person name="Ivanova N."/>
            <person name="Richardson P."/>
        </authorList>
    </citation>
    <scope>NUCLEOTIDE SEQUENCE [LARGE SCALE GENOMIC DNA]</scope>
    <source>
        <strain>CC9605</strain>
    </source>
</reference>
<name>AROK_SYNSC</name>
<protein>
    <recommendedName>
        <fullName evidence="1">Shikimate kinase</fullName>
        <shortName evidence="1">SK</shortName>
        <ecNumber evidence="1">2.7.1.71</ecNumber>
    </recommendedName>
</protein>
<sequence>MSYSGFRVMADSTPTLKKRLSGRSLYLVGMMGSGKTSTGRPLAERLGYGFVDADAVIEQAAGCSIPEIFERDGDAGFRSLESQVLSAISQRHSLVVATGGGVVTQPENWGLLHSGIVIWLDVVPDQLLQRLNADSTVRPLLQTTDPEASLNALLNERRPLYSEADLTVVINDETPEAVADGILQLLPSLLQDPTQRRTD</sequence>
<keyword id="KW-0028">Amino-acid biosynthesis</keyword>
<keyword id="KW-0057">Aromatic amino acid biosynthesis</keyword>
<keyword id="KW-0067">ATP-binding</keyword>
<keyword id="KW-0963">Cytoplasm</keyword>
<keyword id="KW-0418">Kinase</keyword>
<keyword id="KW-0460">Magnesium</keyword>
<keyword id="KW-0479">Metal-binding</keyword>
<keyword id="KW-0547">Nucleotide-binding</keyword>
<keyword id="KW-0808">Transferase</keyword>
<proteinExistence type="inferred from homology"/>
<evidence type="ECO:0000255" key="1">
    <source>
        <dbReference type="HAMAP-Rule" id="MF_00109"/>
    </source>
</evidence>
<organism>
    <name type="scientific">Synechococcus sp. (strain CC9605)</name>
    <dbReference type="NCBI Taxonomy" id="110662"/>
    <lineage>
        <taxon>Bacteria</taxon>
        <taxon>Bacillati</taxon>
        <taxon>Cyanobacteriota</taxon>
        <taxon>Cyanophyceae</taxon>
        <taxon>Synechococcales</taxon>
        <taxon>Synechococcaceae</taxon>
        <taxon>Synechococcus</taxon>
    </lineage>
</organism>
<gene>
    <name evidence="1" type="primary">aroK</name>
    <name type="ordered locus">Syncc9605_2345</name>
</gene>
<feature type="chain" id="PRO_0000237942" description="Shikimate kinase">
    <location>
        <begin position="1"/>
        <end position="199"/>
    </location>
</feature>
<feature type="binding site" evidence="1">
    <location>
        <begin position="32"/>
        <end position="37"/>
    </location>
    <ligand>
        <name>ATP</name>
        <dbReference type="ChEBI" id="CHEBI:30616"/>
    </ligand>
</feature>
<feature type="binding site" evidence="1">
    <location>
        <position position="36"/>
    </location>
    <ligand>
        <name>Mg(2+)</name>
        <dbReference type="ChEBI" id="CHEBI:18420"/>
    </ligand>
</feature>
<feature type="binding site" evidence="1">
    <location>
        <position position="54"/>
    </location>
    <ligand>
        <name>substrate</name>
    </ligand>
</feature>
<feature type="binding site" evidence="1">
    <location>
        <position position="78"/>
    </location>
    <ligand>
        <name>substrate</name>
    </ligand>
</feature>
<feature type="binding site" evidence="1">
    <location>
        <position position="100"/>
    </location>
    <ligand>
        <name>substrate</name>
    </ligand>
</feature>
<feature type="binding site" evidence="1">
    <location>
        <position position="138"/>
    </location>
    <ligand>
        <name>ATP</name>
        <dbReference type="ChEBI" id="CHEBI:30616"/>
    </ligand>
</feature>
<feature type="binding site" evidence="1">
    <location>
        <position position="157"/>
    </location>
    <ligand>
        <name>substrate</name>
    </ligand>
</feature>
<comment type="function">
    <text evidence="1">Catalyzes the specific phosphorylation of the 3-hydroxyl group of shikimic acid using ATP as a cosubstrate.</text>
</comment>
<comment type="catalytic activity">
    <reaction evidence="1">
        <text>shikimate + ATP = 3-phosphoshikimate + ADP + H(+)</text>
        <dbReference type="Rhea" id="RHEA:13121"/>
        <dbReference type="ChEBI" id="CHEBI:15378"/>
        <dbReference type="ChEBI" id="CHEBI:30616"/>
        <dbReference type="ChEBI" id="CHEBI:36208"/>
        <dbReference type="ChEBI" id="CHEBI:145989"/>
        <dbReference type="ChEBI" id="CHEBI:456216"/>
        <dbReference type="EC" id="2.7.1.71"/>
    </reaction>
</comment>
<comment type="cofactor">
    <cofactor evidence="1">
        <name>Mg(2+)</name>
        <dbReference type="ChEBI" id="CHEBI:18420"/>
    </cofactor>
    <text evidence="1">Binds 1 Mg(2+) ion per subunit.</text>
</comment>
<comment type="pathway">
    <text evidence="1">Metabolic intermediate biosynthesis; chorismate biosynthesis; chorismate from D-erythrose 4-phosphate and phosphoenolpyruvate: step 5/7.</text>
</comment>
<comment type="subunit">
    <text evidence="1">Monomer.</text>
</comment>
<comment type="subcellular location">
    <subcellularLocation>
        <location evidence="1">Cytoplasm</location>
    </subcellularLocation>
</comment>
<comment type="similarity">
    <text evidence="1">Belongs to the shikimate kinase family.</text>
</comment>